<keyword id="KW-1003">Cell membrane</keyword>
<keyword id="KW-0342">GTP-binding</keyword>
<keyword id="KW-0449">Lipoprotein</keyword>
<keyword id="KW-0472">Membrane</keyword>
<keyword id="KW-0488">Methylation</keyword>
<keyword id="KW-0547">Nucleotide-binding</keyword>
<keyword id="KW-0636">Prenylation</keyword>
<keyword id="KW-1185">Reference proteome</keyword>
<evidence type="ECO:0000250" key="1"/>
<evidence type="ECO:0000255" key="2"/>
<evidence type="ECO:0000256" key="3">
    <source>
        <dbReference type="SAM" id="MobiDB-lite"/>
    </source>
</evidence>
<evidence type="ECO:0000305" key="4"/>
<protein>
    <recommendedName>
        <fullName>Rho-related protein racH</fullName>
    </recommendedName>
</protein>
<gene>
    <name type="primary">racH</name>
    <name type="ORF">DDB_G0269240</name>
</gene>
<proteinExistence type="inferred from homology"/>
<accession>Q9GPR7</accession>
<accession>Q55DC9</accession>
<dbReference type="EMBL" id="AF310894">
    <property type="protein sequence ID" value="AAG45133.1"/>
    <property type="molecule type" value="Genomic_DNA"/>
</dbReference>
<dbReference type="EMBL" id="AAFI02000005">
    <property type="protein sequence ID" value="EAL71970.1"/>
    <property type="molecule type" value="Genomic_DNA"/>
</dbReference>
<dbReference type="RefSeq" id="XP_646202.1">
    <property type="nucleotide sequence ID" value="XM_641110.1"/>
</dbReference>
<dbReference type="SMR" id="Q9GPR7"/>
<dbReference type="FunCoup" id="Q9GPR7">
    <property type="interactions" value="56"/>
</dbReference>
<dbReference type="STRING" id="44689.Q9GPR7"/>
<dbReference type="PaxDb" id="44689-DDB0191221"/>
<dbReference type="EnsemblProtists" id="EAL71970">
    <property type="protein sequence ID" value="EAL71970"/>
    <property type="gene ID" value="DDB_G0269240"/>
</dbReference>
<dbReference type="GeneID" id="8617155"/>
<dbReference type="KEGG" id="ddi:DDB_G0269240"/>
<dbReference type="dictyBase" id="DDB_G0269240">
    <property type="gene designation" value="racH"/>
</dbReference>
<dbReference type="VEuPathDB" id="AmoebaDB:DDB_G0269240"/>
<dbReference type="eggNOG" id="KOG0393">
    <property type="taxonomic scope" value="Eukaryota"/>
</dbReference>
<dbReference type="HOGENOM" id="CLU_041217_21_3_1"/>
<dbReference type="InParanoid" id="Q9GPR7"/>
<dbReference type="OMA" id="MSQPRME"/>
<dbReference type="PhylomeDB" id="Q9GPR7"/>
<dbReference type="Reactome" id="R-DDI-6798695">
    <property type="pathway name" value="Neutrophil degranulation"/>
</dbReference>
<dbReference type="Reactome" id="R-DDI-9013404">
    <property type="pathway name" value="RAC2 GTPase cycle"/>
</dbReference>
<dbReference type="Reactome" id="R-DDI-9013407">
    <property type="pathway name" value="RHOH GTPase cycle"/>
</dbReference>
<dbReference type="Reactome" id="R-DDI-9013408">
    <property type="pathway name" value="RHOG GTPase cycle"/>
</dbReference>
<dbReference type="Reactome" id="R-DDI-9013418">
    <property type="pathway name" value="RHOBTB2 GTPase cycle"/>
</dbReference>
<dbReference type="Reactome" id="R-DDI-9013422">
    <property type="pathway name" value="RHOBTB1 GTPase cycle"/>
</dbReference>
<dbReference type="PRO" id="PR:Q9GPR7"/>
<dbReference type="Proteomes" id="UP000002195">
    <property type="component" value="Chromosome 1"/>
</dbReference>
<dbReference type="GO" id="GO:0042995">
    <property type="term" value="C:cell projection"/>
    <property type="evidence" value="ECO:0000318"/>
    <property type="project" value="GO_Central"/>
</dbReference>
<dbReference type="GO" id="GO:0000331">
    <property type="term" value="C:contractile vacuole"/>
    <property type="evidence" value="ECO:0000314"/>
    <property type="project" value="dictyBase"/>
</dbReference>
<dbReference type="GO" id="GO:0031410">
    <property type="term" value="C:cytoplasmic vesicle"/>
    <property type="evidence" value="ECO:0000318"/>
    <property type="project" value="GO_Central"/>
</dbReference>
<dbReference type="GO" id="GO:0005856">
    <property type="term" value="C:cytoskeleton"/>
    <property type="evidence" value="ECO:0000318"/>
    <property type="project" value="GO_Central"/>
</dbReference>
<dbReference type="GO" id="GO:0005783">
    <property type="term" value="C:endoplasmic reticulum"/>
    <property type="evidence" value="ECO:0000314"/>
    <property type="project" value="dictyBase"/>
</dbReference>
<dbReference type="GO" id="GO:0005794">
    <property type="term" value="C:Golgi apparatus"/>
    <property type="evidence" value="ECO:0000314"/>
    <property type="project" value="dictyBase"/>
</dbReference>
<dbReference type="GO" id="GO:0005764">
    <property type="term" value="C:lysosome"/>
    <property type="evidence" value="ECO:0000314"/>
    <property type="project" value="dictyBase"/>
</dbReference>
<dbReference type="GO" id="GO:0016020">
    <property type="term" value="C:membrane"/>
    <property type="evidence" value="ECO:0000314"/>
    <property type="project" value="dictyBase"/>
</dbReference>
<dbReference type="GO" id="GO:0005635">
    <property type="term" value="C:nuclear envelope"/>
    <property type="evidence" value="ECO:0000314"/>
    <property type="project" value="dictyBase"/>
</dbReference>
<dbReference type="GO" id="GO:0005886">
    <property type="term" value="C:plasma membrane"/>
    <property type="evidence" value="ECO:0000318"/>
    <property type="project" value="GO_Central"/>
</dbReference>
<dbReference type="GO" id="GO:0005525">
    <property type="term" value="F:GTP binding"/>
    <property type="evidence" value="ECO:0000318"/>
    <property type="project" value="GO_Central"/>
</dbReference>
<dbReference type="GO" id="GO:0003924">
    <property type="term" value="F:GTPase activity"/>
    <property type="evidence" value="ECO:0000318"/>
    <property type="project" value="GO_Central"/>
</dbReference>
<dbReference type="GO" id="GO:0019901">
    <property type="term" value="F:protein kinase binding"/>
    <property type="evidence" value="ECO:0000318"/>
    <property type="project" value="GO_Central"/>
</dbReference>
<dbReference type="GO" id="GO:0007015">
    <property type="term" value="P:actin filament organization"/>
    <property type="evidence" value="ECO:0000318"/>
    <property type="project" value="GO_Central"/>
</dbReference>
<dbReference type="GO" id="GO:0030865">
    <property type="term" value="P:cortical cytoskeleton organization"/>
    <property type="evidence" value="ECO:0000318"/>
    <property type="project" value="GO_Central"/>
</dbReference>
<dbReference type="GO" id="GO:0042742">
    <property type="term" value="P:defense response to bacterium"/>
    <property type="evidence" value="ECO:0000315"/>
    <property type="project" value="dictyBase"/>
</dbReference>
<dbReference type="GO" id="GO:0050829">
    <property type="term" value="P:defense response to Gram-negative bacterium"/>
    <property type="evidence" value="ECO:0000315"/>
    <property type="project" value="dictyBase"/>
</dbReference>
<dbReference type="GO" id="GO:0048388">
    <property type="term" value="P:endosomal lumen acidification"/>
    <property type="evidence" value="ECO:0000315"/>
    <property type="project" value="dictyBase"/>
</dbReference>
<dbReference type="GO" id="GO:0007163">
    <property type="term" value="P:establishment or maintenance of cell polarity"/>
    <property type="evidence" value="ECO:0000318"/>
    <property type="project" value="GO_Central"/>
</dbReference>
<dbReference type="GO" id="GO:0006887">
    <property type="term" value="P:exocytosis"/>
    <property type="evidence" value="ECO:0000315"/>
    <property type="project" value="dictyBase"/>
</dbReference>
<dbReference type="GO" id="GO:0000281">
    <property type="term" value="P:mitotic cytokinesis"/>
    <property type="evidence" value="ECO:0000315"/>
    <property type="project" value="dictyBase"/>
</dbReference>
<dbReference type="GO" id="GO:0006909">
    <property type="term" value="P:phagocytosis"/>
    <property type="evidence" value="ECO:0000315"/>
    <property type="project" value="dictyBase"/>
</dbReference>
<dbReference type="GO" id="GO:0006907">
    <property type="term" value="P:pinocytosis"/>
    <property type="evidence" value="ECO:0000315"/>
    <property type="project" value="dictyBase"/>
</dbReference>
<dbReference type="GO" id="GO:0008104">
    <property type="term" value="P:protein localization"/>
    <property type="evidence" value="ECO:0000315"/>
    <property type="project" value="dictyBase"/>
</dbReference>
<dbReference type="GO" id="GO:0032956">
    <property type="term" value="P:regulation of actin cytoskeleton organization"/>
    <property type="evidence" value="ECO:0000318"/>
    <property type="project" value="GO_Central"/>
</dbReference>
<dbReference type="GO" id="GO:0030833">
    <property type="term" value="P:regulation of actin filament polymerization"/>
    <property type="evidence" value="ECO:0000315"/>
    <property type="project" value="dictyBase"/>
</dbReference>
<dbReference type="GO" id="GO:0008360">
    <property type="term" value="P:regulation of cell shape"/>
    <property type="evidence" value="ECO:0000318"/>
    <property type="project" value="GO_Central"/>
</dbReference>
<dbReference type="GO" id="GO:0060627">
    <property type="term" value="P:regulation of vesicle-mediated transport"/>
    <property type="evidence" value="ECO:0000315"/>
    <property type="project" value="dictyBase"/>
</dbReference>
<dbReference type="GO" id="GO:0009617">
    <property type="term" value="P:response to bacterium"/>
    <property type="evidence" value="ECO:0000315"/>
    <property type="project" value="dictyBase"/>
</dbReference>
<dbReference type="GO" id="GO:0007165">
    <property type="term" value="P:signal transduction"/>
    <property type="evidence" value="ECO:0000318"/>
    <property type="project" value="GO_Central"/>
</dbReference>
<dbReference type="GO" id="GO:0007264">
    <property type="term" value="P:small GTPase-mediated signal transduction"/>
    <property type="evidence" value="ECO:0007669"/>
    <property type="project" value="InterPro"/>
</dbReference>
<dbReference type="CDD" id="cd00157">
    <property type="entry name" value="Rho"/>
    <property type="match status" value="1"/>
</dbReference>
<dbReference type="FunFam" id="3.40.50.300:FF:000983">
    <property type="entry name" value="Rho family GTPase"/>
    <property type="match status" value="1"/>
</dbReference>
<dbReference type="Gene3D" id="3.40.50.300">
    <property type="entry name" value="P-loop containing nucleotide triphosphate hydrolases"/>
    <property type="match status" value="1"/>
</dbReference>
<dbReference type="InterPro" id="IPR027417">
    <property type="entry name" value="P-loop_NTPase"/>
</dbReference>
<dbReference type="InterPro" id="IPR005225">
    <property type="entry name" value="Small_GTP-bd"/>
</dbReference>
<dbReference type="InterPro" id="IPR001806">
    <property type="entry name" value="Small_GTPase"/>
</dbReference>
<dbReference type="InterPro" id="IPR003578">
    <property type="entry name" value="Small_GTPase_Rho"/>
</dbReference>
<dbReference type="NCBIfam" id="TIGR00231">
    <property type="entry name" value="small_GTP"/>
    <property type="match status" value="1"/>
</dbReference>
<dbReference type="PANTHER" id="PTHR24072">
    <property type="entry name" value="RHO FAMILY GTPASE"/>
    <property type="match status" value="1"/>
</dbReference>
<dbReference type="Pfam" id="PF00071">
    <property type="entry name" value="Ras"/>
    <property type="match status" value="1"/>
</dbReference>
<dbReference type="PRINTS" id="PR00449">
    <property type="entry name" value="RASTRNSFRMNG"/>
</dbReference>
<dbReference type="SMART" id="SM00175">
    <property type="entry name" value="RAB"/>
    <property type="match status" value="1"/>
</dbReference>
<dbReference type="SMART" id="SM00173">
    <property type="entry name" value="RAS"/>
    <property type="match status" value="1"/>
</dbReference>
<dbReference type="SMART" id="SM00174">
    <property type="entry name" value="RHO"/>
    <property type="match status" value="1"/>
</dbReference>
<dbReference type="SUPFAM" id="SSF52540">
    <property type="entry name" value="P-loop containing nucleoside triphosphate hydrolases"/>
    <property type="match status" value="1"/>
</dbReference>
<dbReference type="PROSITE" id="PS51420">
    <property type="entry name" value="RHO"/>
    <property type="match status" value="1"/>
</dbReference>
<organism>
    <name type="scientific">Dictyostelium discoideum</name>
    <name type="common">Social amoeba</name>
    <dbReference type="NCBI Taxonomy" id="44689"/>
    <lineage>
        <taxon>Eukaryota</taxon>
        <taxon>Amoebozoa</taxon>
        <taxon>Evosea</taxon>
        <taxon>Eumycetozoa</taxon>
        <taxon>Dictyostelia</taxon>
        <taxon>Dictyosteliales</taxon>
        <taxon>Dictyosteliaceae</taxon>
        <taxon>Dictyostelium</taxon>
    </lineage>
</organism>
<comment type="subcellular location">
    <subcellularLocation>
        <location evidence="4">Cell membrane</location>
        <topology evidence="4">Lipid-anchor</topology>
        <orientation evidence="4">Cytoplasmic side</orientation>
    </subcellularLocation>
</comment>
<comment type="similarity">
    <text evidence="4">Belongs to the small GTPase superfamily. Rho family.</text>
</comment>
<sequence length="200" mass="22189">MVKDIKVMVVGDMSVGKTCLLISYTTNSFPGEYVPTVFDNYNANAIVNNTPINLGLWDTAGSEEYNSFRPLSYPGTDVFIICFSLISQTSFENVIKKWHPEIIQNMEQVPPIILVGTKLDLRGKGKSEEKEVTPEMGEQMRAAIGAYKYSECSALTQDGLTTVFEEAGRVVLFPPSKEELAKSKKDSKKGDKDSKDCIIQ</sequence>
<feature type="chain" id="PRO_0000198906" description="Rho-related protein racH">
    <location>
        <begin position="1"/>
        <end position="197"/>
    </location>
</feature>
<feature type="propeptide" id="PRO_0000281255" description="Removed in mature form" evidence="1">
    <location>
        <begin position="198"/>
        <end position="200"/>
    </location>
</feature>
<feature type="region of interest" description="Disordered" evidence="3">
    <location>
        <begin position="178"/>
        <end position="200"/>
    </location>
</feature>
<feature type="short sequence motif" description="Effector region" evidence="2">
    <location>
        <begin position="33"/>
        <end position="41"/>
    </location>
</feature>
<feature type="binding site" evidence="1">
    <location>
        <begin position="11"/>
        <end position="18"/>
    </location>
    <ligand>
        <name>GTP</name>
        <dbReference type="ChEBI" id="CHEBI:37565"/>
    </ligand>
</feature>
<feature type="binding site" evidence="1">
    <location>
        <begin position="58"/>
        <end position="62"/>
    </location>
    <ligand>
        <name>GTP</name>
        <dbReference type="ChEBI" id="CHEBI:37565"/>
    </ligand>
</feature>
<feature type="binding site" evidence="1">
    <location>
        <begin position="117"/>
        <end position="120"/>
    </location>
    <ligand>
        <name>GTP</name>
        <dbReference type="ChEBI" id="CHEBI:37565"/>
    </ligand>
</feature>
<feature type="modified residue" description="Cysteine methyl ester" evidence="1">
    <location>
        <position position="197"/>
    </location>
</feature>
<feature type="lipid moiety-binding region" description="S-geranylgeranyl cysteine" evidence="1">
    <location>
        <position position="197"/>
    </location>
</feature>
<name>RACH_DICDI</name>
<reference key="1">
    <citation type="journal article" date="2001" name="Nucleic Acids Res.">
        <title>The Dictyostelium discoideum family of Rho-related proteins.</title>
        <authorList>
            <person name="Rivero F."/>
            <person name="Dislich H."/>
            <person name="Gloeckner G."/>
            <person name="Noegel A.A."/>
        </authorList>
    </citation>
    <scope>NUCLEOTIDE SEQUENCE [GENOMIC DNA]</scope>
    <source>
        <strain>AX4</strain>
    </source>
</reference>
<reference key="2">
    <citation type="journal article" date="2005" name="Nature">
        <title>The genome of the social amoeba Dictyostelium discoideum.</title>
        <authorList>
            <person name="Eichinger L."/>
            <person name="Pachebat J.A."/>
            <person name="Gloeckner G."/>
            <person name="Rajandream M.A."/>
            <person name="Sucgang R."/>
            <person name="Berriman M."/>
            <person name="Song J."/>
            <person name="Olsen R."/>
            <person name="Szafranski K."/>
            <person name="Xu Q."/>
            <person name="Tunggal B."/>
            <person name="Kummerfeld S."/>
            <person name="Madera M."/>
            <person name="Konfortov B.A."/>
            <person name="Rivero F."/>
            <person name="Bankier A.T."/>
            <person name="Lehmann R."/>
            <person name="Hamlin N."/>
            <person name="Davies R."/>
            <person name="Gaudet P."/>
            <person name="Fey P."/>
            <person name="Pilcher K."/>
            <person name="Chen G."/>
            <person name="Saunders D."/>
            <person name="Sodergren E.J."/>
            <person name="Davis P."/>
            <person name="Kerhornou A."/>
            <person name="Nie X."/>
            <person name="Hall N."/>
            <person name="Anjard C."/>
            <person name="Hemphill L."/>
            <person name="Bason N."/>
            <person name="Farbrother P."/>
            <person name="Desany B."/>
            <person name="Just E."/>
            <person name="Morio T."/>
            <person name="Rost R."/>
            <person name="Churcher C.M."/>
            <person name="Cooper J."/>
            <person name="Haydock S."/>
            <person name="van Driessche N."/>
            <person name="Cronin A."/>
            <person name="Goodhead I."/>
            <person name="Muzny D.M."/>
            <person name="Mourier T."/>
            <person name="Pain A."/>
            <person name="Lu M."/>
            <person name="Harper D."/>
            <person name="Lindsay R."/>
            <person name="Hauser H."/>
            <person name="James K.D."/>
            <person name="Quiles M."/>
            <person name="Madan Babu M."/>
            <person name="Saito T."/>
            <person name="Buchrieser C."/>
            <person name="Wardroper A."/>
            <person name="Felder M."/>
            <person name="Thangavelu M."/>
            <person name="Johnson D."/>
            <person name="Knights A."/>
            <person name="Loulseged H."/>
            <person name="Mungall K.L."/>
            <person name="Oliver K."/>
            <person name="Price C."/>
            <person name="Quail M.A."/>
            <person name="Urushihara H."/>
            <person name="Hernandez J."/>
            <person name="Rabbinowitsch E."/>
            <person name="Steffen D."/>
            <person name="Sanders M."/>
            <person name="Ma J."/>
            <person name="Kohara Y."/>
            <person name="Sharp S."/>
            <person name="Simmonds M.N."/>
            <person name="Spiegler S."/>
            <person name="Tivey A."/>
            <person name="Sugano S."/>
            <person name="White B."/>
            <person name="Walker D."/>
            <person name="Woodward J.R."/>
            <person name="Winckler T."/>
            <person name="Tanaka Y."/>
            <person name="Shaulsky G."/>
            <person name="Schleicher M."/>
            <person name="Weinstock G.M."/>
            <person name="Rosenthal A."/>
            <person name="Cox E.C."/>
            <person name="Chisholm R.L."/>
            <person name="Gibbs R.A."/>
            <person name="Loomis W.F."/>
            <person name="Platzer M."/>
            <person name="Kay R.R."/>
            <person name="Williams J.G."/>
            <person name="Dear P.H."/>
            <person name="Noegel A.A."/>
            <person name="Barrell B.G."/>
            <person name="Kuspa A."/>
        </authorList>
    </citation>
    <scope>NUCLEOTIDE SEQUENCE [LARGE SCALE GENOMIC DNA]</scope>
    <source>
        <strain>AX4</strain>
    </source>
</reference>